<feature type="transit peptide" description="Mitochondrion" evidence="3">
    <location>
        <begin position="1"/>
        <end position="45"/>
    </location>
</feature>
<feature type="chain" id="PRO_0000003607" description="Cytochrome P450 11B, mitochondrial">
    <location>
        <begin position="46"/>
        <end position="517"/>
    </location>
</feature>
<feature type="binding site" description="axial binding residue" evidence="1">
    <location>
        <position position="465"/>
    </location>
    <ligand>
        <name>heme</name>
        <dbReference type="ChEBI" id="CHEBI:30413"/>
    </ligand>
    <ligandPart>
        <name>Fe</name>
        <dbReference type="ChEBI" id="CHEBI:18248"/>
    </ligandPart>
</feature>
<evidence type="ECO:0000250" key="1"/>
<evidence type="ECO:0000250" key="2">
    <source>
        <dbReference type="UniProtKB" id="P19099"/>
    </source>
</evidence>
<evidence type="ECO:0000255" key="3"/>
<evidence type="ECO:0000305" key="4"/>
<reference key="1">
    <citation type="journal article" date="1995" name="Eur. J. Biochem.">
        <title>Frog cytochrome P-450 (11 beta,aldo), a single enzyme involved in the final steps of glucocorticoid and mineralocorticoid biosynthesis.</title>
        <authorList>
            <person name="Nonaka Y."/>
            <person name="Takemori H."/>
            <person name="Halder S.K."/>
            <person name="Sun T."/>
            <person name="Ohta M."/>
            <person name="Hatano O."/>
            <person name="Takakusu A."/>
            <person name="Okamoto M."/>
        </authorList>
    </citation>
    <scope>NUCLEOTIDE SEQUENCE [MRNA]</scope>
    <source>
        <tissue>Adrenal gland</tissue>
    </source>
</reference>
<organism>
    <name type="scientific">Aquarana catesbeiana</name>
    <name type="common">American bullfrog</name>
    <name type="synonym">Rana catesbeiana</name>
    <dbReference type="NCBI Taxonomy" id="8400"/>
    <lineage>
        <taxon>Eukaryota</taxon>
        <taxon>Metazoa</taxon>
        <taxon>Chordata</taxon>
        <taxon>Craniata</taxon>
        <taxon>Vertebrata</taxon>
        <taxon>Euteleostomi</taxon>
        <taxon>Amphibia</taxon>
        <taxon>Batrachia</taxon>
        <taxon>Anura</taxon>
        <taxon>Neobatrachia</taxon>
        <taxon>Ranoidea</taxon>
        <taxon>Ranidae</taxon>
        <taxon>Aquarana</taxon>
    </lineage>
</organism>
<sequence length="517" mass="59539">MLEKTAARQIGSCLMRCRTLDTTSPLWTGFSRLSTAPLIHEAREDGSLASQTLPYEAIPTTGRSAWFNLFQFWRKNSFQHMHLAMEENFQNLGPIYREKLGTHNSVNIMLPQDVARLFQSEGIFPRRMTMEAWSKHRELRNHKQGVFLLNGEAWRSDRIILNKEVLSLAGVKKFLPFLDEAAADFVTFMKKRMSKNTRGSLTVDLYADLFRFTLEASSYVLYGQRLGLLEEHPNADTLRFISAVETVLKTTLPLLYYPHQILQLFQTRLWNEHMHAWDVIFEQADRCIQNIYQEYCLGQERGYSGIMAELLLQAELPLDSIKANITELMAGGVDTTAMPLLFTLFELARNPSVQRELREEIRKAEAQNPNDLNQLLNSLPLLKGAIKETLRLYPVGITVQRHLIKDIVLHNYHIPAGTLVQVGLYPMGRSPLLFQDALRYDPARWLKREDTNFKALAFGFGSRQCIGRRIAETEITLFLMHMLKNFQIDTVSKDDIKTVFGFILMPEKPPLLTFRPI</sequence>
<comment type="function">
    <text>Has 11 beta-hydroxylation, 18-hydroxylation activities and aldosterone synthetic activity. Catalyzes the final steps of glucocorticoid and mineralocorticoid biosynthesis.</text>
</comment>
<comment type="catalytic activity">
    <reaction>
        <text>a steroid + 2 reduced [adrenodoxin] + O2 + 2 H(+) = an 11beta-hydroxysteroid + 2 oxidized [adrenodoxin] + H2O</text>
        <dbReference type="Rhea" id="RHEA:15629"/>
        <dbReference type="Rhea" id="RHEA-COMP:9998"/>
        <dbReference type="Rhea" id="RHEA-COMP:9999"/>
        <dbReference type="ChEBI" id="CHEBI:15377"/>
        <dbReference type="ChEBI" id="CHEBI:15378"/>
        <dbReference type="ChEBI" id="CHEBI:15379"/>
        <dbReference type="ChEBI" id="CHEBI:33737"/>
        <dbReference type="ChEBI" id="CHEBI:33738"/>
        <dbReference type="ChEBI" id="CHEBI:35341"/>
        <dbReference type="ChEBI" id="CHEBI:35346"/>
        <dbReference type="EC" id="1.14.15.4"/>
    </reaction>
</comment>
<comment type="cofactor">
    <cofactor evidence="2">
        <name>heme</name>
        <dbReference type="ChEBI" id="CHEBI:30413"/>
    </cofactor>
</comment>
<comment type="subcellular location">
    <subcellularLocation>
        <location>Mitochondrion membrane</location>
    </subcellularLocation>
</comment>
<comment type="similarity">
    <text evidence="4">Belongs to the cytochrome P450 family.</text>
</comment>
<dbReference type="EC" id="1.14.15.4"/>
<dbReference type="EMBL" id="D10984">
    <property type="protein sequence ID" value="BAA01756.1"/>
    <property type="molecule type" value="mRNA"/>
</dbReference>
<dbReference type="PIR" id="S69347">
    <property type="entry name" value="S69347"/>
</dbReference>
<dbReference type="SMR" id="Q92104"/>
<dbReference type="GO" id="GO:0005743">
    <property type="term" value="C:mitochondrial inner membrane"/>
    <property type="evidence" value="ECO:0007669"/>
    <property type="project" value="TreeGrafter"/>
</dbReference>
<dbReference type="GO" id="GO:0020037">
    <property type="term" value="F:heme binding"/>
    <property type="evidence" value="ECO:0007669"/>
    <property type="project" value="InterPro"/>
</dbReference>
<dbReference type="GO" id="GO:0005506">
    <property type="term" value="F:iron ion binding"/>
    <property type="evidence" value="ECO:0007669"/>
    <property type="project" value="InterPro"/>
</dbReference>
<dbReference type="GO" id="GO:0004507">
    <property type="term" value="F:steroid 11-beta-monooxygenase activity"/>
    <property type="evidence" value="ECO:0007669"/>
    <property type="project" value="UniProtKB-EC"/>
</dbReference>
<dbReference type="GO" id="GO:0006700">
    <property type="term" value="P:C21-steroid hormone biosynthetic process"/>
    <property type="evidence" value="ECO:0007669"/>
    <property type="project" value="TreeGrafter"/>
</dbReference>
<dbReference type="GO" id="GO:0071375">
    <property type="term" value="P:cellular response to peptide hormone stimulus"/>
    <property type="evidence" value="ECO:0007669"/>
    <property type="project" value="TreeGrafter"/>
</dbReference>
<dbReference type="GO" id="GO:0008203">
    <property type="term" value="P:cholesterol metabolic process"/>
    <property type="evidence" value="ECO:0007669"/>
    <property type="project" value="TreeGrafter"/>
</dbReference>
<dbReference type="GO" id="GO:0034650">
    <property type="term" value="P:cortisol metabolic process"/>
    <property type="evidence" value="ECO:0007669"/>
    <property type="project" value="TreeGrafter"/>
</dbReference>
<dbReference type="GO" id="GO:0006704">
    <property type="term" value="P:glucocorticoid biosynthetic process"/>
    <property type="evidence" value="ECO:0007669"/>
    <property type="project" value="TreeGrafter"/>
</dbReference>
<dbReference type="CDD" id="cd20644">
    <property type="entry name" value="CYP11B"/>
    <property type="match status" value="1"/>
</dbReference>
<dbReference type="FunFam" id="1.10.630.10:FF:000073">
    <property type="entry name" value="Cytochrome P450 family 27 subfamily C member 1"/>
    <property type="match status" value="1"/>
</dbReference>
<dbReference type="Gene3D" id="1.10.630.10">
    <property type="entry name" value="Cytochrome P450"/>
    <property type="match status" value="1"/>
</dbReference>
<dbReference type="InterPro" id="IPR050479">
    <property type="entry name" value="CYP11_CYP27_families"/>
</dbReference>
<dbReference type="InterPro" id="IPR001128">
    <property type="entry name" value="Cyt_P450"/>
</dbReference>
<dbReference type="InterPro" id="IPR017972">
    <property type="entry name" value="Cyt_P450_CS"/>
</dbReference>
<dbReference type="InterPro" id="IPR002401">
    <property type="entry name" value="Cyt_P450_E_grp-I"/>
</dbReference>
<dbReference type="InterPro" id="IPR036396">
    <property type="entry name" value="Cyt_P450_sf"/>
</dbReference>
<dbReference type="PANTHER" id="PTHR24279">
    <property type="entry name" value="CYTOCHROME P450"/>
    <property type="match status" value="1"/>
</dbReference>
<dbReference type="PANTHER" id="PTHR24279:SF1">
    <property type="entry name" value="CYTOCHROME P450 11B2, MITOCHONDRIAL"/>
    <property type="match status" value="1"/>
</dbReference>
<dbReference type="Pfam" id="PF00067">
    <property type="entry name" value="p450"/>
    <property type="match status" value="1"/>
</dbReference>
<dbReference type="PRINTS" id="PR00463">
    <property type="entry name" value="EP450I"/>
</dbReference>
<dbReference type="PRINTS" id="PR00385">
    <property type="entry name" value="P450"/>
</dbReference>
<dbReference type="SUPFAM" id="SSF48264">
    <property type="entry name" value="Cytochrome P450"/>
    <property type="match status" value="1"/>
</dbReference>
<dbReference type="PROSITE" id="PS00086">
    <property type="entry name" value="CYTOCHROME_P450"/>
    <property type="match status" value="1"/>
</dbReference>
<name>CP11B_AQUCT</name>
<protein>
    <recommendedName>
        <fullName>Cytochrome P450 11B, mitochondrial</fullName>
    </recommendedName>
    <alternativeName>
        <fullName>CYPXIB</fullName>
    </alternativeName>
    <alternativeName>
        <fullName>Cytochrome P450C11</fullName>
    </alternativeName>
    <alternativeName>
        <fullName>P-450(11 beta,aldo)</fullName>
    </alternativeName>
    <alternativeName>
        <fullName>Steroid 11-beta-hydroxylase</fullName>
        <ecNumber>1.14.15.4</ecNumber>
    </alternativeName>
</protein>
<keyword id="KW-0349">Heme</keyword>
<keyword id="KW-0408">Iron</keyword>
<keyword id="KW-0472">Membrane</keyword>
<keyword id="KW-0479">Metal-binding</keyword>
<keyword id="KW-0496">Mitochondrion</keyword>
<keyword id="KW-0503">Monooxygenase</keyword>
<keyword id="KW-0560">Oxidoreductase</keyword>
<keyword id="KW-0755">Steroidogenesis</keyword>
<keyword id="KW-0809">Transit peptide</keyword>
<proteinExistence type="evidence at transcript level"/>
<gene>
    <name type="primary">CYP11B</name>
</gene>
<accession>Q92104</accession>